<sequence length="532" mass="57825">MAPSSPRPALPALLVLLGALFPGPGNAQTSVSPSKVILPRGGSVLVTCSTSCDQPKLLGIETPLPKKELLLPGNNRKVYELSNVQEDSQPMCYSNCPDGQSTAKTFLTVYWTPERVELAPLPSWQPVGKNLTLRCQVEGGAPRANLTVVLLRGEKELKREPAVGEPAEVTTTVLVRRDHHGANFSCRTELDLRPQGLELFENTSAPYQLQTFVLPATPPQLVSPRVLEVDTQGTVVCSLDGLFPVSEAQVHLALGDQRLNPTVTYGNDSFSAKASVSVTAEDEGTQRLTCAVILGNQSQETLQTVTIYSFPAPNVILTKPEVSEGTEVTVKCEAHPRAKVTLNGVPAQPLGPRAQLLLKATPEDNGRSFSCSATLEVAGQLIHKNQTRELRVLYGPRLDERDCPGNWTWPENSQQTPMCQAWGNPLPELKCLKDGTFPLPIGESVTVTRDLEGTYLCRARSTQGEVTRKVTVNVLSPRYEIVIITVVAAAVIMGTAGLSTYLYNRQRKIKKYRLQQAQKGTPMKPNTQATPP</sequence>
<protein>
    <recommendedName>
        <fullName>Intercellular adhesion molecule 1</fullName>
        <shortName>ICAM-1</shortName>
    </recommendedName>
    <alternativeName>
        <fullName>Major group rhinovirus receptor</fullName>
    </alternativeName>
    <cdAntigenName>CD54</cdAntigenName>
</protein>
<feature type="signal peptide">
    <location>
        <begin position="1"/>
        <end position="27"/>
    </location>
</feature>
<feature type="chain" id="PRO_0000014783" description="Intercellular adhesion molecule 1">
    <location>
        <begin position="28"/>
        <end position="532"/>
    </location>
</feature>
<feature type="topological domain" description="Extracellular" evidence="1">
    <location>
        <begin position="28"/>
        <end position="480"/>
    </location>
</feature>
<feature type="transmembrane region" description="Helical" evidence="1">
    <location>
        <begin position="481"/>
        <end position="503"/>
    </location>
</feature>
<feature type="topological domain" description="Cytoplasmic" evidence="1">
    <location>
        <begin position="504"/>
        <end position="532"/>
    </location>
</feature>
<feature type="domain" description="Ig-like C2-type 1">
    <location>
        <begin position="41"/>
        <end position="103"/>
    </location>
</feature>
<feature type="domain" description="Ig-like C2-type 2">
    <location>
        <begin position="128"/>
        <end position="193"/>
    </location>
</feature>
<feature type="domain" description="Ig-like C2-type 3">
    <location>
        <begin position="230"/>
        <end position="297"/>
    </location>
</feature>
<feature type="domain" description="Ig-like C2-type 4">
    <location>
        <begin position="325"/>
        <end position="378"/>
    </location>
</feature>
<feature type="domain" description="Ig-like C2-type 5">
    <location>
        <begin position="412"/>
        <end position="464"/>
    </location>
</feature>
<feature type="short sequence motif" description="Cell attachment site; atypical" evidence="1">
    <location>
        <begin position="152"/>
        <end position="154"/>
    </location>
</feature>
<feature type="modified residue" description="Phosphothreonine" evidence="33 34 35">
    <location>
        <position position="521"/>
    </location>
</feature>
<feature type="modified residue" description="Phosphothreonine" evidence="33 34 36">
    <location>
        <position position="530"/>
    </location>
</feature>
<feature type="glycosylation site" description="N-linked (GlcNAc...) asparagine" evidence="6 25">
    <location>
        <position position="130"/>
    </location>
</feature>
<feature type="glycosylation site" description="N-linked (GlcNAc...) (complex) asparagine" evidence="6 13 15 25">
    <location>
        <position position="145"/>
    </location>
</feature>
<feature type="glycosylation site" description="N-linked (GlcNAc...) asparagine" evidence="6 25">
    <location>
        <position position="183"/>
    </location>
</feature>
<feature type="glycosylation site" description="N-linked (GlcNAc...) asparagine" evidence="6 14 25 26">
    <location>
        <position position="202"/>
    </location>
</feature>
<feature type="glycosylation site" description="N-linked (GlcNAc...) asparagine" evidence="7 10 14 15">
    <location>
        <position position="267"/>
    </location>
</feature>
<feature type="glycosylation site" description="N-linked (GlcNAc...) asparagine" evidence="7">
    <location>
        <position position="296"/>
    </location>
</feature>
<feature type="glycosylation site" description="N-linked (GlcNAc...) asparagine" evidence="7">
    <location>
        <position position="385"/>
    </location>
</feature>
<feature type="glycosylation site" description="N-linked (GlcNAc...) asparagine" evidence="1">
    <location>
        <position position="406"/>
    </location>
</feature>
<feature type="disulfide bond" evidence="6 25 26 29 30 31">
    <location>
        <begin position="48"/>
        <end position="92"/>
    </location>
</feature>
<feature type="disulfide bond" evidence="6 25 26 29 30 31">
    <location>
        <begin position="52"/>
        <end position="96"/>
    </location>
</feature>
<feature type="disulfide bond" evidence="6 25 26 29 30 31">
    <location>
        <begin position="135"/>
        <end position="186"/>
    </location>
</feature>
<feature type="disulfide bond" evidence="7 32">
    <location>
        <begin position="237"/>
        <end position="290"/>
    </location>
</feature>
<feature type="disulfide bond" evidence="7 32">
    <location>
        <begin position="332"/>
        <end position="371"/>
    </location>
</feature>
<feature type="disulfide bond" evidence="7 32">
    <location>
        <begin position="403"/>
        <end position="419"/>
    </location>
</feature>
<feature type="disulfide bond" evidence="7 32">
    <location>
        <begin position="431"/>
        <end position="457"/>
    </location>
</feature>
<feature type="sequence variant" id="VAR_010204" description="Probable risk factor for cerebral malaria at homozygosity; dbSNP:rs5491." evidence="2 24 27">
    <original>K</original>
    <variation>M</variation>
    <location>
        <position position="56"/>
    </location>
</feature>
<feature type="sequence variant" id="VAR_014651" description="In dbSNP:rs5492.">
    <original>K</original>
    <variation>N</variation>
    <location>
        <position position="155"/>
    </location>
</feature>
<feature type="sequence variant" id="VAR_014186" description="In dbSNP:rs1799969." evidence="22 23 27">
    <original>G</original>
    <variation>R</variation>
    <location>
        <position position="241"/>
    </location>
</feature>
<feature type="sequence variant" id="VAR_014652" description="In dbSNP:rs5495.">
    <original>V</original>
    <variation>M</variation>
    <location>
        <position position="315"/>
    </location>
</feature>
<feature type="sequence variant" id="VAR_014653" description="In dbSNP:rs1801714." evidence="27">
    <original>P</original>
    <variation>L</variation>
    <location>
        <position position="352"/>
    </location>
</feature>
<feature type="sequence variant" id="VAR_014654" description="In dbSNP:rs5497." evidence="27">
    <original>R</original>
    <variation>Q</variation>
    <location>
        <position position="397"/>
    </location>
</feature>
<feature type="sequence variant" id="VAR_014187" description="In dbSNP:rs5498." evidence="2 8 11 20 21 22">
    <original>K</original>
    <variation>E</variation>
    <location>
        <position position="469"/>
    </location>
</feature>
<feature type="sequence variant" id="VAR_016267" description="In dbSNP:rs5030400." evidence="27">
    <original>R</original>
    <variation>W</variation>
    <location>
        <position position="478"/>
    </location>
</feature>
<feature type="sequence conflict" description="In Ref. 10; CAA40441." evidence="28" ref="10">
    <original>AL</original>
    <variation>PV</variation>
    <location>
        <begin position="9"/>
        <end position="10"/>
    </location>
</feature>
<feature type="sequence conflict" description="In Ref. 11; AAQ14902." evidence="28" ref="11">
    <original>L</original>
    <variation>F</variation>
    <location>
        <position position="17"/>
    </location>
</feature>
<feature type="sequence conflict" description="In Ref. 11; AAQ14902." evidence="28" ref="11">
    <original>A</original>
    <variation>V</variation>
    <location>
        <position position="27"/>
    </location>
</feature>
<feature type="strand" evidence="37">
    <location>
        <begin position="29"/>
        <end position="39"/>
    </location>
</feature>
<feature type="strand" evidence="37">
    <location>
        <begin position="42"/>
        <end position="50"/>
    </location>
</feature>
<feature type="strand" evidence="37">
    <location>
        <begin position="52"/>
        <end position="54"/>
    </location>
</feature>
<feature type="strand" evidence="37">
    <location>
        <begin position="56"/>
        <end position="61"/>
    </location>
</feature>
<feature type="strand" evidence="37">
    <location>
        <begin position="66"/>
        <end position="69"/>
    </location>
</feature>
<feature type="strand" evidence="37">
    <location>
        <begin position="71"/>
        <end position="84"/>
    </location>
</feature>
<feature type="strand" evidence="37">
    <location>
        <begin position="91"/>
        <end position="95"/>
    </location>
</feature>
<feature type="strand" evidence="38">
    <location>
        <begin position="97"/>
        <end position="99"/>
    </location>
</feature>
<feature type="strand" evidence="37">
    <location>
        <begin position="100"/>
        <end position="104"/>
    </location>
</feature>
<feature type="strand" evidence="37">
    <location>
        <begin position="106"/>
        <end position="111"/>
    </location>
</feature>
<feature type="strand" evidence="37">
    <location>
        <begin position="114"/>
        <end position="118"/>
    </location>
</feature>
<feature type="strand" evidence="37">
    <location>
        <begin position="123"/>
        <end position="125"/>
    </location>
</feature>
<feature type="strand" evidence="37">
    <location>
        <begin position="129"/>
        <end position="138"/>
    </location>
</feature>
<feature type="helix" evidence="37">
    <location>
        <begin position="143"/>
        <end position="145"/>
    </location>
</feature>
<feature type="strand" evidence="37">
    <location>
        <begin position="146"/>
        <end position="152"/>
    </location>
</feature>
<feature type="strand" evidence="37">
    <location>
        <begin position="155"/>
        <end position="161"/>
    </location>
</feature>
<feature type="turn" evidence="37">
    <location>
        <begin position="164"/>
        <end position="166"/>
    </location>
</feature>
<feature type="strand" evidence="37">
    <location>
        <begin position="167"/>
        <end position="174"/>
    </location>
</feature>
<feature type="helix" evidence="40">
    <location>
        <begin position="177"/>
        <end position="179"/>
    </location>
</feature>
<feature type="strand" evidence="37">
    <location>
        <begin position="183"/>
        <end position="191"/>
    </location>
</feature>
<feature type="helix" evidence="37">
    <location>
        <begin position="193"/>
        <end position="195"/>
    </location>
</feature>
<feature type="strand" evidence="37">
    <location>
        <begin position="199"/>
        <end position="203"/>
    </location>
</feature>
<feature type="strand" evidence="40">
    <location>
        <begin position="210"/>
        <end position="212"/>
    </location>
</feature>
<feature type="strand" evidence="39">
    <location>
        <begin position="220"/>
        <end position="222"/>
    </location>
</feature>
<feature type="strand" evidence="39">
    <location>
        <begin position="225"/>
        <end position="228"/>
    </location>
</feature>
<feature type="strand" evidence="39">
    <location>
        <begin position="231"/>
        <end position="241"/>
    </location>
</feature>
<feature type="helix" evidence="39">
    <location>
        <begin position="245"/>
        <end position="247"/>
    </location>
</feature>
<feature type="strand" evidence="39">
    <location>
        <begin position="249"/>
        <end position="254"/>
    </location>
</feature>
<feature type="strand" evidence="39">
    <location>
        <begin position="262"/>
        <end position="265"/>
    </location>
</feature>
<feature type="strand" evidence="39">
    <location>
        <begin position="267"/>
        <end position="278"/>
    </location>
</feature>
<feature type="helix" evidence="39">
    <location>
        <begin position="280"/>
        <end position="282"/>
    </location>
</feature>
<feature type="strand" evidence="39">
    <location>
        <begin position="284"/>
        <end position="294"/>
    </location>
</feature>
<feature type="strand" evidence="39">
    <location>
        <begin position="297"/>
        <end position="308"/>
    </location>
</feature>
<feature type="strand" evidence="39">
    <location>
        <begin position="314"/>
        <end position="318"/>
    </location>
</feature>
<feature type="strand" evidence="39">
    <location>
        <begin position="320"/>
        <end position="323"/>
    </location>
</feature>
<feature type="strand" evidence="39">
    <location>
        <begin position="327"/>
        <end position="333"/>
    </location>
</feature>
<feature type="strand" evidence="39">
    <location>
        <begin position="338"/>
        <end position="344"/>
    </location>
</feature>
<feature type="strand" evidence="39">
    <location>
        <begin position="346"/>
        <end position="348"/>
    </location>
</feature>
<feature type="strand" evidence="39">
    <location>
        <begin position="351"/>
        <end position="354"/>
    </location>
</feature>
<feature type="strand" evidence="39">
    <location>
        <begin position="357"/>
        <end position="359"/>
    </location>
</feature>
<feature type="helix" evidence="39">
    <location>
        <begin position="362"/>
        <end position="364"/>
    </location>
</feature>
<feature type="strand" evidence="39">
    <location>
        <begin position="367"/>
        <end position="376"/>
    </location>
</feature>
<feature type="strand" evidence="39">
    <location>
        <begin position="378"/>
        <end position="397"/>
    </location>
</feature>
<feature type="helix" evidence="39">
    <location>
        <begin position="400"/>
        <end position="402"/>
    </location>
</feature>
<feature type="strand" evidence="39">
    <location>
        <begin position="405"/>
        <end position="410"/>
    </location>
</feature>
<feature type="strand" evidence="39">
    <location>
        <begin position="422"/>
        <end position="425"/>
    </location>
</feature>
<feature type="strand" evidence="39">
    <location>
        <begin position="428"/>
        <end position="433"/>
    </location>
</feature>
<feature type="turn" evidence="39">
    <location>
        <begin position="434"/>
        <end position="436"/>
    </location>
</feature>
<feature type="helix" evidence="39">
    <location>
        <begin position="449"/>
        <end position="451"/>
    </location>
</feature>
<feature type="strand" evidence="39">
    <location>
        <begin position="453"/>
        <end position="461"/>
    </location>
</feature>
<feature type="strand" evidence="39">
    <location>
        <begin position="464"/>
        <end position="475"/>
    </location>
</feature>
<keyword id="KW-0002">3D-structure</keyword>
<keyword id="KW-0130">Cell adhesion</keyword>
<keyword id="KW-0903">Direct protein sequencing</keyword>
<keyword id="KW-1015">Disulfide bond</keyword>
<keyword id="KW-0325">Glycoprotein</keyword>
<keyword id="KW-1183">Host cell receptor for virus entry</keyword>
<keyword id="KW-0945">Host-virus interaction</keyword>
<keyword id="KW-0393">Immunoglobulin domain</keyword>
<keyword id="KW-0472">Membrane</keyword>
<keyword id="KW-0597">Phosphoprotein</keyword>
<keyword id="KW-1267">Proteomics identification</keyword>
<keyword id="KW-0675">Receptor</keyword>
<keyword id="KW-1185">Reference proteome</keyword>
<keyword id="KW-0677">Repeat</keyword>
<keyword id="KW-0732">Signal</keyword>
<keyword id="KW-0812">Transmembrane</keyword>
<keyword id="KW-1133">Transmembrane helix</keyword>
<keyword id="KW-0832">Ubl conjugation</keyword>
<name>ICAM1_HUMAN</name>
<proteinExistence type="evidence at protein level"/>
<organism>
    <name type="scientific">Homo sapiens</name>
    <name type="common">Human</name>
    <dbReference type="NCBI Taxonomy" id="9606"/>
    <lineage>
        <taxon>Eukaryota</taxon>
        <taxon>Metazoa</taxon>
        <taxon>Chordata</taxon>
        <taxon>Craniata</taxon>
        <taxon>Vertebrata</taxon>
        <taxon>Euteleostomi</taxon>
        <taxon>Mammalia</taxon>
        <taxon>Eutheria</taxon>
        <taxon>Euarchontoglires</taxon>
        <taxon>Primates</taxon>
        <taxon>Haplorrhini</taxon>
        <taxon>Catarrhini</taxon>
        <taxon>Hominidae</taxon>
        <taxon>Homo</taxon>
    </lineage>
</organism>
<accession>P05362</accession>
<accession>B2R6M3</accession>
<accession>Q5NKV7</accession>
<accession>Q96B50</accession>
<comment type="function">
    <text evidence="4 12">ICAM proteins are ligands for the leukocyte adhesion protein LFA-1 (integrin alpha-L/beta-2). During leukocyte trans-endothelial migration, ICAM1 engagement promotes the assembly of endothelial apical cups through ARHGEF26/SGEF and RHOG activation.</text>
</comment>
<comment type="function">
    <text evidence="16 19">(Microbial infection) Acts as a receptor for major receptor group rhinovirus A-B capsid proteins.</text>
</comment>
<comment type="function">
    <text evidence="3 9 26">(Microbial infection) Acts as a receptor for Coxsackievirus A21 capsid proteins.</text>
</comment>
<comment type="function">
    <text evidence="5">(Microbial infection) Upon Kaposi's sarcoma-associated herpesvirus/HHV-8 infection, is degraded by viral E3 ubiquitin ligase MIR2, presumably to prevent lysis of infected cells by cytotoxic T-lymphocytes and NK cell.</text>
</comment>
<comment type="subunit">
    <text evidence="4 6 7 12 17 28">Homodimer (Probable). Interacts with MUC1 and promotes cell aggregation in epithelial cells. Interacts with ARHGEF26/SGEF. Interacts (on T cell side) with CD81, CD247 and CD9 at immunological synapses between antigen-presenting cells and T cells.</text>
</comment>
<comment type="subunit">
    <text evidence="16 19">(Microbial infection) Interacts with major receptor group rhinovirus A-B capsid proteins (PubMed:1968231, PubMed:2538243).</text>
</comment>
<comment type="subunit">
    <text evidence="3 9 26">(Microbial infection) Interacts with Coxsackievirus A21 capsid proteins (PubMed:11160747, PubMed:16004874, PubMed:9539703).</text>
</comment>
<comment type="interaction">
    <interactant intactId="EBI-1035358">
        <id>P05362</id>
    </interactant>
    <interactant intactId="EBI-372594">
        <id>Q99828</id>
        <label>CIB1</label>
    </interactant>
    <organismsDiffer>false</organismsDiffer>
    <experiments>3</experiments>
</comment>
<comment type="interaction">
    <interactant intactId="EBI-1035358">
        <id>P05362</id>
    </interactant>
    <interactant intactId="EBI-3867333">
        <id>A8MQ03</id>
        <label>CYSRT1</label>
    </interactant>
    <organismsDiffer>false</organismsDiffer>
    <experiments>3</experiments>
</comment>
<comment type="interaction">
    <interactant intactId="EBI-1035358">
        <id>P05362</id>
    </interactant>
    <interactant intactId="EBI-961214">
        <id>P20701</id>
        <label>ITGAL</label>
    </interactant>
    <organismsDiffer>false</organismsDiffer>
    <experiments>3</experiments>
</comment>
<comment type="interaction">
    <interactant intactId="EBI-1035358">
        <id>P05362</id>
    </interactant>
    <interactant intactId="EBI-751001">
        <id>Q14145</id>
        <label>KEAP1</label>
    </interactant>
    <organismsDiffer>false</organismsDiffer>
    <experiments>3</experiments>
</comment>
<comment type="interaction">
    <interactant intactId="EBI-1035358">
        <id>P05362</id>
    </interactant>
    <interactant intactId="EBI-10171774">
        <id>P60410</id>
        <label>KRTAP10-8</label>
    </interactant>
    <organismsDiffer>false</organismsDiffer>
    <experiments>3</experiments>
</comment>
<comment type="interaction">
    <interactant intactId="EBI-1035358">
        <id>P05362</id>
    </interactant>
    <interactant intactId="EBI-9515652">
        <id>P18440</id>
        <label>NAT1</label>
    </interactant>
    <organismsDiffer>false</organismsDiffer>
    <experiments>2</experiments>
</comment>
<comment type="interaction">
    <interactant intactId="EBI-1035358">
        <id>P05362</id>
    </interactant>
    <interactant intactId="EBI-1043580">
        <id>Q9BRX2</id>
        <label>PELO</label>
    </interactant>
    <organismsDiffer>false</organismsDiffer>
    <experiments>3</experiments>
</comment>
<comment type="interaction">
    <interactant intactId="EBI-1035358">
        <id>P05362</id>
    </interactant>
    <interactant intactId="EBI-947187">
        <id>Q9UHD9</id>
        <label>UBQLN2</label>
    </interactant>
    <organismsDiffer>false</organismsDiffer>
    <experiments>5</experiments>
</comment>
<comment type="subcellular location">
    <subcellularLocation>
        <location>Membrane</location>
        <topology>Single-pass type I membrane protein</topology>
    </subcellularLocation>
</comment>
<comment type="induction">
    <text evidence="18">Up-regulated by coagulation factor Xa (F10) in atrial tissues (PubMed:24041930). Up-regulated in atrial tissues by rapid pacing resembling atrial fibrillation (PubMed:24041930).</text>
</comment>
<comment type="PTM">
    <text>Monoubiquitinated, which is promoted by MARCH9 and leads to endocytosis.</text>
</comment>
<comment type="polymorphism">
    <text evidence="24">Variant p.Lys56Met, known as ICAM1-Kilifi, may influence susceptibility to cerebral malaria [MIM:611162].</text>
</comment>
<comment type="similarity">
    <text evidence="28">Belongs to the immunoglobulin superfamily. ICAM family.</text>
</comment>
<comment type="online information" name="Atlas of Genetics and Cytogenetics in Oncology and Haematology">
    <link uri="https://atlasgeneticsoncology.org/gene/40909/ICAM1"/>
</comment>
<comment type="online information" name="Wikipedia">
    <link uri="https://en.wikipedia.org/wiki/Intercellular_adhesion_molecule"/>
    <text>Intercellular adhesion molecule entry</text>
</comment>
<comment type="online information" name="Virus Particle ExploreR db">
    <link uri="https://viperdb.scripps.edu/Info_Page.php?VDB=1z7z"/>
    <text>Icosahedral capsid structure</text>
</comment>
<comment type="online information" name="Functional Glycomics Gateway - Glycan Binding">
    <link uri="http://www.functionalglycomics.org/glycomics/GBPServlet?&amp;operationType=view&amp;cbpId=cbp_hum_Itlect_261"/>
    <text>ICAM-1</text>
</comment>
<reference key="1">
    <citation type="journal article" date="1988" name="Nature">
        <title>ICAM, an adhesion ligand of LFA-1, is homologous to the neural cell adhesion molecule NCAM.</title>
        <authorList>
            <person name="Simmons D."/>
            <person name="Makgoba M.W."/>
            <person name="Seed B."/>
        </authorList>
    </citation>
    <scope>NUCLEOTIDE SEQUENCE [MRNA]</scope>
    <scope>VARIANT GLU-469</scope>
</reference>
<reference key="2">
    <citation type="journal article" date="1988" name="Cell">
        <title>Primary structure of ICAM-1 demonstrates interaction between members of the immunoglobulin and integrin supergene families.</title>
        <authorList>
            <person name="Staunton D.E."/>
            <person name="Marlin S.D."/>
            <person name="Stratowa C."/>
            <person name="Dustin M.L."/>
            <person name="Springer T.A."/>
        </authorList>
    </citation>
    <scope>NUCLEOTIDE SEQUENCE [MRNA]</scope>
    <scope>VARIANT GLU-469</scope>
</reference>
<reference key="3">
    <citation type="journal article" date="1989" name="Proc. Natl. Acad. Sci. U.S.A.">
        <title>cDNA cloning reveals that the major group rhinovirus receptor on HeLa cells is intercellular adhesion molecule 1.</title>
        <authorList>
            <person name="Tomassini J.E."/>
            <person name="Graham D."/>
            <person name="Dewitt C.M."/>
            <person name="Lineberger D.W."/>
            <person name="Rodkey J.A."/>
            <person name="Colonno R.J."/>
        </authorList>
    </citation>
    <scope>NUCLEOTIDE SEQUENCE [MRNA]</scope>
</reference>
<reference key="4">
    <citation type="journal article" date="1991" name="J. Immunol.">
        <title>Cloning of the human gene for intercellular adhesion molecule 1 and analysis of its 5'-regulatory region. Induction by cytokines and phorbol ester.</title>
        <authorList>
            <person name="Voraberger G.F."/>
            <person name="Schaefer R."/>
            <person name="Stratowa C."/>
        </authorList>
    </citation>
    <scope>NUCLEOTIDE SEQUENCE [GENOMIC DNA]</scope>
    <scope>VARIANT GLU-469</scope>
</reference>
<reference key="5">
    <citation type="submission" date="2003-05" db="EMBL/GenBank/DDBJ databases">
        <title>Cloning of human full-length CDSs in BD Creator(TM) system donor vector.</title>
        <authorList>
            <person name="Kalnine N."/>
            <person name="Chen X."/>
            <person name="Rolfs A."/>
            <person name="Halleck A."/>
            <person name="Hines L."/>
            <person name="Eisenstein S."/>
            <person name="Koundinya M."/>
            <person name="Raphael J."/>
            <person name="Moreira D."/>
            <person name="Kelley T."/>
            <person name="LaBaer J."/>
            <person name="Lin Y."/>
            <person name="Phelan M."/>
            <person name="Farmer A."/>
        </authorList>
    </citation>
    <scope>NUCLEOTIDE SEQUENCE [LARGE SCALE MRNA]</scope>
</reference>
<reference key="6">
    <citation type="submission" date="2003-01" db="EMBL/GenBank/DDBJ databases">
        <authorList>
            <consortium name="SeattleSNPs variation discovery resource"/>
        </authorList>
    </citation>
    <scope>NUCLEOTIDE SEQUENCE [GENOMIC DNA]</scope>
    <scope>VARIANT MET-56</scope>
    <scope>VARIANTS ARG-241; LEU-352; GLN-397 AND TRP-478</scope>
</reference>
<reference key="7">
    <citation type="journal article" date="2004" name="Nat. Genet.">
        <title>Complete sequencing and characterization of 21,243 full-length human cDNAs.</title>
        <authorList>
            <person name="Ota T."/>
            <person name="Suzuki Y."/>
            <person name="Nishikawa T."/>
            <person name="Otsuki T."/>
            <person name="Sugiyama T."/>
            <person name="Irie R."/>
            <person name="Wakamatsu A."/>
            <person name="Hayashi K."/>
            <person name="Sato H."/>
            <person name="Nagai K."/>
            <person name="Kimura K."/>
            <person name="Makita H."/>
            <person name="Sekine M."/>
            <person name="Obayashi M."/>
            <person name="Nishi T."/>
            <person name="Shibahara T."/>
            <person name="Tanaka T."/>
            <person name="Ishii S."/>
            <person name="Yamamoto J."/>
            <person name="Saito K."/>
            <person name="Kawai Y."/>
            <person name="Isono Y."/>
            <person name="Nakamura Y."/>
            <person name="Nagahari K."/>
            <person name="Murakami K."/>
            <person name="Yasuda T."/>
            <person name="Iwayanagi T."/>
            <person name="Wagatsuma M."/>
            <person name="Shiratori A."/>
            <person name="Sudo H."/>
            <person name="Hosoiri T."/>
            <person name="Kaku Y."/>
            <person name="Kodaira H."/>
            <person name="Kondo H."/>
            <person name="Sugawara M."/>
            <person name="Takahashi M."/>
            <person name="Kanda K."/>
            <person name="Yokoi T."/>
            <person name="Furuya T."/>
            <person name="Kikkawa E."/>
            <person name="Omura Y."/>
            <person name="Abe K."/>
            <person name="Kamihara K."/>
            <person name="Katsuta N."/>
            <person name="Sato K."/>
            <person name="Tanikawa M."/>
            <person name="Yamazaki M."/>
            <person name="Ninomiya K."/>
            <person name="Ishibashi T."/>
            <person name="Yamashita H."/>
            <person name="Murakawa K."/>
            <person name="Fujimori K."/>
            <person name="Tanai H."/>
            <person name="Kimata M."/>
            <person name="Watanabe M."/>
            <person name="Hiraoka S."/>
            <person name="Chiba Y."/>
            <person name="Ishida S."/>
            <person name="Ono Y."/>
            <person name="Takiguchi S."/>
            <person name="Watanabe S."/>
            <person name="Yosida M."/>
            <person name="Hotuta T."/>
            <person name="Kusano J."/>
            <person name="Kanehori K."/>
            <person name="Takahashi-Fujii A."/>
            <person name="Hara H."/>
            <person name="Tanase T.-O."/>
            <person name="Nomura Y."/>
            <person name="Togiya S."/>
            <person name="Komai F."/>
            <person name="Hara R."/>
            <person name="Takeuchi K."/>
            <person name="Arita M."/>
            <person name="Imose N."/>
            <person name="Musashino K."/>
            <person name="Yuuki H."/>
            <person name="Oshima A."/>
            <person name="Sasaki N."/>
            <person name="Aotsuka S."/>
            <person name="Yoshikawa Y."/>
            <person name="Matsunawa H."/>
            <person name="Ichihara T."/>
            <person name="Shiohata N."/>
            <person name="Sano S."/>
            <person name="Moriya S."/>
            <person name="Momiyama H."/>
            <person name="Satoh N."/>
            <person name="Takami S."/>
            <person name="Terashima Y."/>
            <person name="Suzuki O."/>
            <person name="Nakagawa S."/>
            <person name="Senoh A."/>
            <person name="Mizoguchi H."/>
            <person name="Goto Y."/>
            <person name="Shimizu F."/>
            <person name="Wakebe H."/>
            <person name="Hishigaki H."/>
            <person name="Watanabe T."/>
            <person name="Sugiyama A."/>
            <person name="Takemoto M."/>
            <person name="Kawakami B."/>
            <person name="Yamazaki M."/>
            <person name="Watanabe K."/>
            <person name="Kumagai A."/>
            <person name="Itakura S."/>
            <person name="Fukuzumi Y."/>
            <person name="Fujimori Y."/>
            <person name="Komiyama M."/>
            <person name="Tashiro H."/>
            <person name="Tanigami A."/>
            <person name="Fujiwara T."/>
            <person name="Ono T."/>
            <person name="Yamada K."/>
            <person name="Fujii Y."/>
            <person name="Ozaki K."/>
            <person name="Hirao M."/>
            <person name="Ohmori Y."/>
            <person name="Kawabata A."/>
            <person name="Hikiji T."/>
            <person name="Kobatake N."/>
            <person name="Inagaki H."/>
            <person name="Ikema Y."/>
            <person name="Okamoto S."/>
            <person name="Okitani R."/>
            <person name="Kawakami T."/>
            <person name="Noguchi S."/>
            <person name="Itoh T."/>
            <person name="Shigeta K."/>
            <person name="Senba T."/>
            <person name="Matsumura K."/>
            <person name="Nakajima Y."/>
            <person name="Mizuno T."/>
            <person name="Morinaga M."/>
            <person name="Sasaki M."/>
            <person name="Togashi T."/>
            <person name="Oyama M."/>
            <person name="Hata H."/>
            <person name="Watanabe M."/>
            <person name="Komatsu T."/>
            <person name="Mizushima-Sugano J."/>
            <person name="Satoh T."/>
            <person name="Shirai Y."/>
            <person name="Takahashi Y."/>
            <person name="Nakagawa K."/>
            <person name="Okumura K."/>
            <person name="Nagase T."/>
            <person name="Nomura N."/>
            <person name="Kikuchi H."/>
            <person name="Masuho Y."/>
            <person name="Yamashita R."/>
            <person name="Nakai K."/>
            <person name="Yada T."/>
            <person name="Nakamura Y."/>
            <person name="Ohara O."/>
            <person name="Isogai T."/>
            <person name="Sugano S."/>
        </authorList>
    </citation>
    <scope>NUCLEOTIDE SEQUENCE [LARGE SCALE MRNA]</scope>
    <source>
        <tissue>Lung</tissue>
    </source>
</reference>
<reference key="8">
    <citation type="submission" date="2005-07" db="EMBL/GenBank/DDBJ databases">
        <authorList>
            <person name="Mural R.J."/>
            <person name="Istrail S."/>
            <person name="Sutton G.G."/>
            <person name="Florea L."/>
            <person name="Halpern A.L."/>
            <person name="Mobarry C.M."/>
            <person name="Lippert R."/>
            <person name="Walenz B."/>
            <person name="Shatkay H."/>
            <person name="Dew I."/>
            <person name="Miller J.R."/>
            <person name="Flanigan M.J."/>
            <person name="Edwards N.J."/>
            <person name="Bolanos R."/>
            <person name="Fasulo D."/>
            <person name="Halldorsson B.V."/>
            <person name="Hannenhalli S."/>
            <person name="Turner R."/>
            <person name="Yooseph S."/>
            <person name="Lu F."/>
            <person name="Nusskern D.R."/>
            <person name="Shue B.C."/>
            <person name="Zheng X.H."/>
            <person name="Zhong F."/>
            <person name="Delcher A.L."/>
            <person name="Huson D.H."/>
            <person name="Kravitz S.A."/>
            <person name="Mouchard L."/>
            <person name="Reinert K."/>
            <person name="Remington K.A."/>
            <person name="Clark A.G."/>
            <person name="Waterman M.S."/>
            <person name="Eichler E.E."/>
            <person name="Adams M.D."/>
            <person name="Hunkapiller M.W."/>
            <person name="Myers E.W."/>
            <person name="Venter J.C."/>
        </authorList>
    </citation>
    <scope>NUCLEOTIDE SEQUENCE [LARGE SCALE GENOMIC DNA]</scope>
</reference>
<reference key="9">
    <citation type="journal article" date="2004" name="Genome Res.">
        <title>The status, quality, and expansion of the NIH full-length cDNA project: the Mammalian Gene Collection (MGC).</title>
        <authorList>
            <consortium name="The MGC Project Team"/>
        </authorList>
    </citation>
    <scope>NUCLEOTIDE SEQUENCE [LARGE SCALE MRNA]</scope>
    <source>
        <tissue>Kidney</tissue>
    </source>
</reference>
<reference key="10">
    <citation type="journal article" date="1990" name="Immunobiology">
        <title>Structural characteristics of the 5' region of the human ICAM-1 gene.</title>
        <authorList>
            <person name="Stade B.G."/>
            <person name="Messer G."/>
            <person name="Riethmueller G."/>
            <person name="Johnson J.P."/>
        </authorList>
    </citation>
    <scope>NUCLEOTIDE SEQUENCE [GENOMIC DNA] OF 1-22</scope>
</reference>
<reference key="11">
    <citation type="journal article" date="2005" name="J. Theor. Biol.">
        <title>The potential significance of adaptive evolution and dimerization in chimpanzee intercellular cell adhesion molecules (ICAMs).</title>
        <authorList>
            <person name="Walter N.A.R."/>
            <person name="Stebbing J."/>
            <person name="Messier W."/>
        </authorList>
    </citation>
    <scope>NUCLEOTIDE SEQUENCE [MRNA] OF 5-532</scope>
    <scope>VARIANT GLU-469</scope>
    <source>
        <tissue>Blood</tissue>
    </source>
</reference>
<reference key="12">
    <citation type="journal article" date="1989" name="Cell">
        <title>The major human rhinovirus receptor is ICAM-1.</title>
        <authorList>
            <person name="Greve J.M."/>
            <person name="Davis G."/>
            <person name="Meyer A.M."/>
            <person name="Forte C.P."/>
            <person name="Yost S.C."/>
            <person name="Marlor C.W."/>
            <person name="Kamarck M.E."/>
            <person name="McClelland A."/>
        </authorList>
    </citation>
    <scope>PARTIAL PROTEIN SEQUENCE</scope>
    <scope>FUNCTION (MICROBIAL INFECTION)</scope>
    <scope>INTERACTION WITH RHINOVIRUS CAPSID PROTEINS</scope>
</reference>
<reference key="13">
    <citation type="journal article" date="1990" name="Nature">
        <title>A soluble form of intercellular adhesion molecule-1 inhibits rhinovirus infection.</title>
        <authorList>
            <person name="Marlin S.D."/>
            <person name="Staunton D.E."/>
            <person name="Springer T.A."/>
            <person name="Stratowa C."/>
            <person name="Sommergruber W."/>
            <person name="Merluzzi V.J."/>
        </authorList>
    </citation>
    <scope>FUNCTION (MICROBIAL INFECTION)</scope>
    <scope>INTERACTION WITH RHINOVIRUS CAPSID PROTEINS</scope>
</reference>
<reference key="14">
    <citation type="journal article" date="2001" name="Digestion 63 Suppl.">
        <title>MUC1 mucin core protein binds to the domain 1 of ICAM-1.</title>
        <authorList>
            <person name="Hayashi T."/>
            <person name="Takahashi T."/>
            <person name="Motoya S."/>
            <person name="Ishida T."/>
            <person name="Itoh F."/>
            <person name="Adachi M."/>
            <person name="Hinoda Y."/>
            <person name="Imai K."/>
        </authorList>
    </citation>
    <scope>INTERACTION WITH MUC1</scope>
    <scope>FUNCTION</scope>
</reference>
<reference key="15">
    <citation type="journal article" date="2001" name="J. Virol.">
        <title>Interaction of coxsackievirus A21 with its cellular receptor, ICAM-1.</title>
        <authorList>
            <person name="Xiao C."/>
            <person name="Bator C.M."/>
            <person name="Bowman V.D."/>
            <person name="Rieder E."/>
            <person name="He Y."/>
            <person name="Hebert B."/>
            <person name="Bella J."/>
            <person name="Baker T.S."/>
            <person name="Wimmer E."/>
            <person name="Kuhn R.J."/>
            <person name="Rossmann M.G."/>
        </authorList>
    </citation>
    <scope>FUNCTION (MICROBIAL INFECTION)</scope>
    <scope>INTERACTION WITH COXSACKIEVIRUS A21 CAPSID PROTEINS</scope>
</reference>
<reference key="16">
    <citation type="journal article" date="2001" name="J. Clin. Invest.">
        <title>A viral protein that selectively downregulates ICAM-1 and B7-2 and modulates T cell costimulation.</title>
        <authorList>
            <person name="Coscoy L."/>
            <person name="Ganem D."/>
        </authorList>
    </citation>
    <scope>FUNCTION (MICROBIAL INFECTION)</scope>
</reference>
<reference key="17">
    <citation type="journal article" date="2005" name="J. Proteome Res.">
        <title>Human plasma N-glycoproteome analysis by immunoaffinity subtraction, hydrazide chemistry, and mass spectrometry.</title>
        <authorList>
            <person name="Liu T."/>
            <person name="Qian W.-J."/>
            <person name="Gritsenko M.A."/>
            <person name="Camp D.G. II"/>
            <person name="Monroe M.E."/>
            <person name="Moore R.J."/>
            <person name="Smith R.D."/>
        </authorList>
    </citation>
    <scope>GLYCOSYLATION [LARGE SCALE ANALYSIS] AT ASN-267</scope>
    <source>
        <tissue>Plasma</tissue>
    </source>
</reference>
<reference key="18">
    <citation type="journal article" date="2007" name="FEBS Lett.">
        <title>MARCH-IX mediates ubiquitination and downregulation of ICAM-1.</title>
        <authorList>
            <person name="Hoer S."/>
            <person name="Smith L."/>
            <person name="Lehner P.J."/>
        </authorList>
    </citation>
    <scope>UBIQUITINATION</scope>
</reference>
<reference key="19">
    <citation type="journal article" date="2007" name="J. Cell Biol.">
        <title>RhoG regulates endothelial apical cup assembly downstream from ICAM1 engagement and is involved in leukocyte trans-endothelial migration.</title>
        <authorList>
            <person name="van Buul J.D."/>
            <person name="Allingham M.J."/>
            <person name="Samson T."/>
            <person name="Meller J."/>
            <person name="Boulter E."/>
            <person name="Garcia-Mata R."/>
            <person name="Burridge K."/>
        </authorList>
    </citation>
    <scope>INTERACTION WITH ARHGEF26</scope>
    <scope>FUNCTION</scope>
</reference>
<reference key="20">
    <citation type="journal article" date="2008" name="Proc. Natl. Acad. Sci. U.S.A.">
        <title>A quantitative atlas of mitotic phosphorylation.</title>
        <authorList>
            <person name="Dephoure N."/>
            <person name="Zhou C."/>
            <person name="Villen J."/>
            <person name="Beausoleil S.A."/>
            <person name="Bakalarski C.E."/>
            <person name="Elledge S.J."/>
            <person name="Gygi S.P."/>
        </authorList>
    </citation>
    <scope>PHOSPHORYLATION [LARGE SCALE ANALYSIS] AT THR-521 AND THR-530</scope>
    <scope>IDENTIFICATION BY MASS SPECTROMETRY [LARGE SCALE ANALYSIS]</scope>
    <source>
        <tissue>Cervix carcinoma</tissue>
    </source>
</reference>
<reference key="21">
    <citation type="journal article" date="2009" name="J. Proteome Res.">
        <title>Glycoproteomics analysis of human liver tissue by combination of multiple enzyme digestion and hydrazide chemistry.</title>
        <authorList>
            <person name="Chen R."/>
            <person name="Jiang X."/>
            <person name="Sun D."/>
            <person name="Han G."/>
            <person name="Wang F."/>
            <person name="Ye M."/>
            <person name="Wang L."/>
            <person name="Zou H."/>
        </authorList>
    </citation>
    <scope>GLYCOSYLATION [LARGE SCALE ANALYSIS] AT ASN-202 AND ASN-267</scope>
    <source>
        <tissue>Liver</tissue>
    </source>
</reference>
<reference key="22">
    <citation type="journal article" date="2009" name="Mol. Cell. Proteomics">
        <title>A strategy for precise and large scale identification of core fucosylated glycoproteins.</title>
        <authorList>
            <person name="Jia W."/>
            <person name="Lu Z."/>
            <person name="Fu Y."/>
            <person name="Wang H.P."/>
            <person name="Wang L.H."/>
            <person name="Chi H."/>
            <person name="Yuan Z.F."/>
            <person name="Zheng Z.B."/>
            <person name="Song L.N."/>
            <person name="Han H.H."/>
            <person name="Liang Y.M."/>
            <person name="Wang J.L."/>
            <person name="Cai Y."/>
            <person name="Zhang Y.K."/>
            <person name="Deng Y.L."/>
            <person name="Ying W.T."/>
            <person name="He S.M."/>
            <person name="Qian X.H."/>
        </authorList>
    </citation>
    <scope>GLYCOSYLATION AT ASN-145</scope>
</reference>
<reference key="23">
    <citation type="journal article" date="2009" name="Nat. Biotechnol.">
        <title>Mass-spectrometric identification and relative quantification of N-linked cell surface glycoproteins.</title>
        <authorList>
            <person name="Wollscheid B."/>
            <person name="Bausch-Fluck D."/>
            <person name="Henderson C."/>
            <person name="O'Brien R."/>
            <person name="Bibel M."/>
            <person name="Schiess R."/>
            <person name="Aebersold R."/>
            <person name="Watts J.D."/>
        </authorList>
    </citation>
    <scope>GLYCOSYLATION [LARGE SCALE ANALYSIS] AT ASN-145 AND ASN-267</scope>
    <source>
        <tissue>Leukemic T-cell</tissue>
    </source>
</reference>
<reference key="24">
    <citation type="journal article" date="2010" name="Sci. Signal.">
        <title>Quantitative phosphoproteomics reveals widespread full phosphorylation site occupancy during mitosis.</title>
        <authorList>
            <person name="Olsen J.V."/>
            <person name="Vermeulen M."/>
            <person name="Santamaria A."/>
            <person name="Kumar C."/>
            <person name="Miller M.L."/>
            <person name="Jensen L.J."/>
            <person name="Gnad F."/>
            <person name="Cox J."/>
            <person name="Jensen T.S."/>
            <person name="Nigg E.A."/>
            <person name="Brunak S."/>
            <person name="Mann M."/>
        </authorList>
    </citation>
    <scope>PHOSPHORYLATION [LARGE SCALE ANALYSIS] AT THR-521 AND THR-530</scope>
    <scope>IDENTIFICATION BY MASS SPECTROMETRY [LARGE SCALE ANALYSIS]</scope>
    <source>
        <tissue>Cervix carcinoma</tissue>
    </source>
</reference>
<reference key="25">
    <citation type="journal article" date="2011" name="BMC Syst. Biol.">
        <title>Initial characterization of the human central proteome.</title>
        <authorList>
            <person name="Burkard T.R."/>
            <person name="Planyavsky M."/>
            <person name="Kaupe I."/>
            <person name="Breitwieser F.P."/>
            <person name="Buerckstuemmer T."/>
            <person name="Bennett K.L."/>
            <person name="Superti-Furga G."/>
            <person name="Colinge J."/>
        </authorList>
    </citation>
    <scope>IDENTIFICATION BY MASS SPECTROMETRY [LARGE SCALE ANALYSIS]</scope>
</reference>
<reference key="26">
    <citation type="journal article" date="2013" name="Eur. J. Pharmacol.">
        <title>Coagulation factor Xa induces an inflammatory signalling by activation of protease-activated receptors in human atrial tissue.</title>
        <authorList>
            <person name="Bukowska A."/>
            <person name="Zacharias I."/>
            <person name="Weinert S."/>
            <person name="Skopp K."/>
            <person name="Hartmann C."/>
            <person name="Huth C."/>
            <person name="Goette A."/>
        </authorList>
    </citation>
    <scope>INDUCTION BY F10</scope>
    <scope>INDUCTION BY RAPID PACING</scope>
</reference>
<reference key="27">
    <citation type="journal article" date="2013" name="J. Proteome Res.">
        <title>Toward a comprehensive characterization of a human cancer cell phosphoproteome.</title>
        <authorList>
            <person name="Zhou H."/>
            <person name="Di Palma S."/>
            <person name="Preisinger C."/>
            <person name="Peng M."/>
            <person name="Polat A.N."/>
            <person name="Heck A.J."/>
            <person name="Mohammed S."/>
        </authorList>
    </citation>
    <scope>PHOSPHORYLATION [LARGE SCALE ANALYSIS] AT THR-521</scope>
    <scope>IDENTIFICATION BY MASS SPECTROMETRY [LARGE SCALE ANALYSIS]</scope>
    <source>
        <tissue>Erythroleukemia</tissue>
    </source>
</reference>
<reference key="28">
    <citation type="journal article" date="2013" name="Mol. Cell. Biol.">
        <title>CD81 controls sustained T cell activation signaling and defines the maturation stages of cognate immunological synapses.</title>
        <authorList>
            <person name="Rocha-Perugini V."/>
            <person name="Zamai M."/>
            <person name="Gonzalez-Granado J.M."/>
            <person name="Barreiro O."/>
            <person name="Tejera E."/>
            <person name="Yanez-Mo M."/>
            <person name="Caiolfa V.R."/>
            <person name="Sanchez-Madrid F."/>
        </authorList>
    </citation>
    <scope>INTERACTION WITH CD81</scope>
    <scope>INTERACTION WITH CD9</scope>
    <scope>INTERACTION WITH CD247</scope>
</reference>
<reference key="29">
    <citation type="journal article" date="2014" name="J. Proteomics">
        <title>An enzyme assisted RP-RPLC approach for in-depth analysis of human liver phosphoproteome.</title>
        <authorList>
            <person name="Bian Y."/>
            <person name="Song C."/>
            <person name="Cheng K."/>
            <person name="Dong M."/>
            <person name="Wang F."/>
            <person name="Huang J."/>
            <person name="Sun D."/>
            <person name="Wang L."/>
            <person name="Ye M."/>
            <person name="Zou H."/>
        </authorList>
    </citation>
    <scope>PHOSPHORYLATION [LARGE SCALE ANALYSIS] AT THR-530</scope>
    <scope>IDENTIFICATION BY MASS SPECTROMETRY [LARGE SCALE ANALYSIS]</scope>
    <source>
        <tissue>Liver</tissue>
    </source>
</reference>
<reference key="30">
    <citation type="journal article" date="2015" name="Proteomics">
        <title>N-terminome analysis of the human mitochondrial proteome.</title>
        <authorList>
            <person name="Vaca Jacome A.S."/>
            <person name="Rabilloud T."/>
            <person name="Schaeffer-Reiss C."/>
            <person name="Rompais M."/>
            <person name="Ayoub D."/>
            <person name="Lane L."/>
            <person name="Bairoch A."/>
            <person name="Van Dorsselaer A."/>
            <person name="Carapito C."/>
        </authorList>
    </citation>
    <scope>IDENTIFICATION BY MASS SPECTROMETRY [LARGE SCALE ANALYSIS]</scope>
</reference>
<reference key="31">
    <citation type="journal article" date="1998" name="Proc. Natl. Acad. Sci. U.S.A.">
        <title>A dimeric crystal structure for the N-terminal two domains of intercellular adhesion molecule-1.</title>
        <authorList>
            <person name="Casasnovas J.M."/>
            <person name="Stehle T."/>
            <person name="Liu J.H."/>
            <person name="Wang J.H."/>
            <person name="Springer T.A."/>
        </authorList>
    </citation>
    <scope>X-RAY CRYSTALLOGRAPHY (3.00 ANGSTROMS) OF 28-217</scope>
    <scope>DISULFIDE BONDS</scope>
    <scope>GLYCOSYLATION AT ASN-130; ASN-145; ASN-183 AND ASN-202</scope>
</reference>
<reference key="32">
    <citation type="journal article" date="1998" name="Proc. Natl. Acad. Sci. U.S.A.">
        <title>The structure of the two amino-terminal domains of human ICAM-1 suggests how it functions as a rhinovirus receptor and as an LFA-1 integrin ligand.</title>
        <authorList>
            <person name="Bella J."/>
            <person name="Kolatkar P.R."/>
            <person name="Marlor C.W."/>
            <person name="Greve J.M."/>
            <person name="Rossmann M.G."/>
        </authorList>
    </citation>
    <scope>X-RAY CRYSTALLOGRAPHY (3.25 ANGSTROMS) OF 28-212 IN COMPLEX WITH HUMAN RHINOVIRUS 14</scope>
    <scope>DISULFIDE BONDS</scope>
    <scope>GLYCOSYLATION AT ASN-202</scope>
    <scope>SUBUNIT</scope>
</reference>
<reference key="33">
    <citation type="journal article" date="1999" name="EMBO J.">
        <title>Structural studies of two rhinovirus serotypes complexed with fragments of their cellular receptor.</title>
        <authorList>
            <person name="Kolatkar P.R."/>
            <person name="Bella J."/>
            <person name="Olson N.H."/>
            <person name="Bator C.M."/>
            <person name="Baker T.S."/>
            <person name="Rossmann M.G."/>
        </authorList>
    </citation>
    <scope>X-RAY CRYSTALLOGRAPHY (3.25 ANGSTROMS) OF 28-212</scope>
</reference>
<reference key="34">
    <citation type="journal article" date="2003" name="Cell">
        <title>Structures of the alpha L I domain and its complex with ICAM-1 reveal a shape-shifting pathway for integrin regulation.</title>
        <authorList>
            <person name="Shimaoka M."/>
            <person name="Xiao T."/>
            <person name="Liu J.H."/>
            <person name="Yang Y."/>
            <person name="Dong Y."/>
            <person name="Jun C.D."/>
            <person name="McCormack A."/>
            <person name="Zhang R."/>
            <person name="Joachimiak A."/>
            <person name="Takagi J."/>
            <person name="Wang J.H."/>
            <person name="Springer T.A."/>
        </authorList>
    </citation>
    <scope>X-RAY CRYSTALLOGRAPHY (3.3 ANGSTROMS) OF 28-318 IN COMPLEX WITH ITGAL VWFA DOMAIN</scope>
    <scope>DISULFIDE BONDS</scope>
    <scope>GLYCOSYLATION AT ASN-130; ASN-145; ASN-183 AND ASN-202</scope>
    <scope>SUBUNIT</scope>
</reference>
<reference key="35">
    <citation type="journal article" date="2004" name="Mol. Cell">
        <title>Structural basis for dimerization of ICAM-1 on the cell surface.</title>
        <authorList>
            <person name="Yang Y."/>
            <person name="Jun C.D."/>
            <person name="Liu J.H."/>
            <person name="Zhang R."/>
            <person name="Joachimiak A."/>
            <person name="Springer T.A."/>
            <person name="Wang J.H."/>
        </authorList>
    </citation>
    <scope>X-RAY CRYSTALLOGRAPHY (3.06 ANGSTROMS) OF 212-477</scope>
    <scope>SUBUNIT</scope>
    <scope>DISULFIDE BONDS</scope>
    <scope>GLYCOSYLATION AT ASN-267; ASN-296 AND ASN-385</scope>
</reference>
<reference key="36">
    <citation type="journal article" date="2005" name="Structure">
        <title>The crystal structure of coxsackievirus A21 and its interaction with ICAM-1.</title>
        <authorList>
            <person name="Xiao C."/>
            <person name="Bator-Kelly C.M."/>
            <person name="Rieder E."/>
            <person name="Chipman P.R."/>
            <person name="Craig A."/>
            <person name="Kuhn R.J."/>
            <person name="Wimmer E."/>
            <person name="Rossmann M.G."/>
        </authorList>
    </citation>
    <scope>STRUCTURE BY ELECTRON MICROSCOPY (8.0 ANGSTROMS) OF 24-473 IN COMPLEX WITH COXSACKIEVIRUS A21</scope>
    <scope>SUBUNIT</scope>
</reference>
<reference key="37">
    <citation type="journal article" date="1994" name="Genomics">
        <title>Polymorphisms and linkage analysis for ICAM-1 and the selectin gene cluster.</title>
        <authorList>
            <person name="Vora D.K."/>
            <person name="Rosenbloom C.L."/>
            <person name="Beaudet A.L."/>
            <person name="Cottingham R.W."/>
        </authorList>
    </citation>
    <scope>VARIANTS ARG-241 AND GLU-469</scope>
</reference>
<reference key="38">
    <citation type="journal article" date="1996" name="Hum. Genet.">
        <title>DNA polymorphisms in adhesion molecule genes -- a new risk factor for early atherosclerosis.</title>
        <authorList>
            <person name="Wenzel K."/>
            <person name="Ernst M."/>
            <person name="Rohde K."/>
            <person name="Baumann G."/>
            <person name="Speer A."/>
        </authorList>
    </citation>
    <scope>VARIANT ARG-241</scope>
</reference>
<reference key="39">
    <citation type="journal article" date="1997" name="Hum. Mol. Genet.">
        <title>A high frequency African coding polymorphism in the N-terminal domain of ICAM-1 predisposing to cerebral malaria in Kenya.</title>
        <authorList>
            <person name="Fernandez-Reyes D."/>
            <person name="Craig A.G."/>
            <person name="Kyes S.A."/>
            <person name="Peshu N."/>
            <person name="Snow R.W."/>
            <person name="Berendt A.R."/>
            <person name="Marsh K."/>
            <person name="Newbold C.I."/>
        </authorList>
    </citation>
    <scope>VARIANT MET-56</scope>
    <scope>ASSOCIATION WITH SUSCEPTIBILITY TO MALARIA</scope>
</reference>
<reference key="40">
    <citation type="journal article" date="1999" name="Nat. Genet.">
        <title>Patterns of single-nucleotide polymorphisms in candidate genes for blood-pressure homeostasis.</title>
        <authorList>
            <person name="Halushka M.K."/>
            <person name="Fan J.-B."/>
            <person name="Bentley K."/>
            <person name="Hsie L."/>
            <person name="Shen N."/>
            <person name="Weder A."/>
            <person name="Cooper R."/>
            <person name="Lipshutz R."/>
            <person name="Chakravarti A."/>
        </authorList>
    </citation>
    <scope>VARIANT MET-56</scope>
    <scope>VARIANT GLU-469</scope>
</reference>
<gene>
    <name type="primary">ICAM1</name>
</gene>
<dbReference type="EMBL" id="X06990">
    <property type="protein sequence ID" value="CAA30051.1"/>
    <property type="molecule type" value="mRNA"/>
</dbReference>
<dbReference type="EMBL" id="J03132">
    <property type="protein sequence ID" value="AAA52709.1"/>
    <property type="molecule type" value="mRNA"/>
</dbReference>
<dbReference type="EMBL" id="M24283">
    <property type="protein sequence ID" value="AAA52708.1"/>
    <property type="molecule type" value="mRNA"/>
</dbReference>
<dbReference type="EMBL" id="X59286">
    <property type="protein sequence ID" value="CAA41977.1"/>
    <property type="molecule type" value="Genomic_DNA"/>
</dbReference>
<dbReference type="EMBL" id="X59287">
    <property type="protein sequence ID" value="CAA41977.1"/>
    <property type="status" value="JOINED"/>
    <property type="molecule type" value="Genomic_DNA"/>
</dbReference>
<dbReference type="EMBL" id="X59288">
    <property type="protein sequence ID" value="CAA41977.1"/>
    <property type="status" value="JOINED"/>
    <property type="molecule type" value="Genomic_DNA"/>
</dbReference>
<dbReference type="EMBL" id="BT006854">
    <property type="protein sequence ID" value="AAP35500.1"/>
    <property type="molecule type" value="mRNA"/>
</dbReference>
<dbReference type="EMBL" id="AY225514">
    <property type="protein sequence ID" value="AAO30128.1"/>
    <property type="molecule type" value="Genomic_DNA"/>
</dbReference>
<dbReference type="EMBL" id="AK312636">
    <property type="protein sequence ID" value="BAG35520.1"/>
    <property type="molecule type" value="mRNA"/>
</dbReference>
<dbReference type="EMBL" id="CH471106">
    <property type="protein sequence ID" value="EAW84086.1"/>
    <property type="molecule type" value="Genomic_DNA"/>
</dbReference>
<dbReference type="EMBL" id="BC015969">
    <property type="protein sequence ID" value="AAH15969.1"/>
    <property type="molecule type" value="mRNA"/>
</dbReference>
<dbReference type="EMBL" id="X57151">
    <property type="protein sequence ID" value="CAA40441.1"/>
    <property type="molecule type" value="Genomic_DNA"/>
</dbReference>
<dbReference type="EMBL" id="AF340039">
    <property type="protein sequence ID" value="AAQ14902.1"/>
    <property type="molecule type" value="mRNA"/>
</dbReference>
<dbReference type="CCDS" id="CCDS12231.1"/>
<dbReference type="PIR" id="A29849">
    <property type="entry name" value="A29849"/>
</dbReference>
<dbReference type="RefSeq" id="NP_000192.2">
    <property type="nucleotide sequence ID" value="NM_000201.3"/>
</dbReference>
<dbReference type="PDB" id="1D3E">
    <property type="method" value="EM"/>
    <property type="resolution" value="28.00 A"/>
    <property type="chains" value="I=28-212"/>
</dbReference>
<dbReference type="PDB" id="1D3I">
    <property type="method" value="EM"/>
    <property type="resolution" value="26.00 A"/>
    <property type="chains" value="I=28-212"/>
</dbReference>
<dbReference type="PDB" id="1D3L">
    <property type="method" value="X-ray"/>
    <property type="resolution" value="3.25 A"/>
    <property type="chains" value="A=28-212"/>
</dbReference>
<dbReference type="PDB" id="1IAM">
    <property type="method" value="X-ray"/>
    <property type="resolution" value="2.10 A"/>
    <property type="chains" value="A=28-212"/>
</dbReference>
<dbReference type="PDB" id="1IC1">
    <property type="method" value="X-ray"/>
    <property type="resolution" value="3.00 A"/>
    <property type="chains" value="A/B=28-217"/>
</dbReference>
<dbReference type="PDB" id="1MQ8">
    <property type="method" value="X-ray"/>
    <property type="resolution" value="3.30 A"/>
    <property type="chains" value="A/C=28-318"/>
</dbReference>
<dbReference type="PDB" id="1P53">
    <property type="method" value="X-ray"/>
    <property type="resolution" value="3.06 A"/>
    <property type="chains" value="A/B=212-477"/>
</dbReference>
<dbReference type="PDB" id="1Z7Z">
    <property type="method" value="EM"/>
    <property type="resolution" value="8.00 A"/>
    <property type="chains" value="I=28-477"/>
</dbReference>
<dbReference type="PDB" id="2OZ4">
    <property type="method" value="X-ray"/>
    <property type="resolution" value="2.70 A"/>
    <property type="chains" value="A=213-477"/>
</dbReference>
<dbReference type="PDB" id="3TCX">
    <property type="method" value="X-ray"/>
    <property type="resolution" value="3.60 A"/>
    <property type="chains" value="A/C/E/G/I/K/M/O/Q/S/U/W/Y/a=29-112"/>
</dbReference>
<dbReference type="PDB" id="5MZA">
    <property type="method" value="X-ray"/>
    <property type="resolution" value="2.78 A"/>
    <property type="chains" value="B=28-212"/>
</dbReference>
<dbReference type="PDB" id="6EIT">
    <property type="method" value="EM"/>
    <property type="resolution" value="3.90 A"/>
    <property type="chains" value="4=28-112"/>
</dbReference>
<dbReference type="PDB" id="6S8U">
    <property type="method" value="X-ray"/>
    <property type="resolution" value="3.67 A"/>
    <property type="chains" value="B=28-212"/>
</dbReference>
<dbReference type="PDB" id="7BG7">
    <property type="method" value="EM"/>
    <property type="resolution" value="2.40 A"/>
    <property type="chains" value="B=28-480"/>
</dbReference>
<dbReference type="PDBsum" id="1D3E"/>
<dbReference type="PDBsum" id="1D3I"/>
<dbReference type="PDBsum" id="1D3L"/>
<dbReference type="PDBsum" id="1IAM"/>
<dbReference type="PDBsum" id="1IC1"/>
<dbReference type="PDBsum" id="1MQ8"/>
<dbReference type="PDBsum" id="1P53"/>
<dbReference type="PDBsum" id="1Z7Z"/>
<dbReference type="PDBsum" id="2OZ4"/>
<dbReference type="PDBsum" id="3TCX"/>
<dbReference type="PDBsum" id="5MZA"/>
<dbReference type="PDBsum" id="6EIT"/>
<dbReference type="PDBsum" id="6S8U"/>
<dbReference type="PDBsum" id="7BG7"/>
<dbReference type="EMDB" id="EMD-12172"/>
<dbReference type="EMDB" id="EMD-3880"/>
<dbReference type="SMR" id="P05362"/>
<dbReference type="BioGRID" id="109610">
    <property type="interactions" value="397"/>
</dbReference>
<dbReference type="CORUM" id="P05362"/>
<dbReference type="DIP" id="DIP-36658N"/>
<dbReference type="FunCoup" id="P05362">
    <property type="interactions" value="562"/>
</dbReference>
<dbReference type="IntAct" id="P05362">
    <property type="interactions" value="78"/>
</dbReference>
<dbReference type="MINT" id="P05362"/>
<dbReference type="STRING" id="9606.ENSP00000264832"/>
<dbReference type="BindingDB" id="P05362"/>
<dbReference type="ChEMBL" id="CHEMBL3070"/>
<dbReference type="DrugBank" id="DB06224">
    <property type="generic name" value="Alicaforsen"/>
</dbReference>
<dbReference type="DrugBank" id="DB08818">
    <property type="generic name" value="Hyaluronic acid"/>
</dbReference>
<dbReference type="DrugBank" id="DB11611">
    <property type="generic name" value="Lifitegrast"/>
</dbReference>
<dbReference type="DrugBank" id="DB12598">
    <property type="generic name" value="Nafamostat"/>
</dbReference>
<dbReference type="DrugBank" id="DB00108">
    <property type="generic name" value="Natalizumab"/>
</dbReference>
<dbReference type="DrugCentral" id="P05362"/>
<dbReference type="TCDB" id="8.A.23.4.1">
    <property type="family name" value="the basigin (basigin) family"/>
</dbReference>
<dbReference type="UniLectin" id="P05362"/>
<dbReference type="GlyConnect" id="1423">
    <property type="glycosylation" value="1 N-Linked glycan (1 site)"/>
</dbReference>
<dbReference type="GlyCosmos" id="P05362">
    <property type="glycosylation" value="8 sites, 1 glycan"/>
</dbReference>
<dbReference type="GlyGen" id="P05362">
    <property type="glycosylation" value="12 sites, 108 N-linked glycans (6 sites), 2 O-linked glycans (2 sites)"/>
</dbReference>
<dbReference type="iPTMnet" id="P05362"/>
<dbReference type="PhosphoSitePlus" id="P05362"/>
<dbReference type="SwissPalm" id="P05362"/>
<dbReference type="BioMuta" id="ICAM1"/>
<dbReference type="DMDM" id="68067956"/>
<dbReference type="CPTAC" id="CPTAC-219"/>
<dbReference type="CPTAC" id="CPTAC-220"/>
<dbReference type="CPTAC" id="CPTAC-5943"/>
<dbReference type="CPTAC" id="non-CPTAC-2679"/>
<dbReference type="jPOST" id="P05362"/>
<dbReference type="MassIVE" id="P05362"/>
<dbReference type="PaxDb" id="9606-ENSP00000264832"/>
<dbReference type="PeptideAtlas" id="P05362"/>
<dbReference type="ProteomicsDB" id="51830"/>
<dbReference type="Pumba" id="P05362"/>
<dbReference type="ABCD" id="P05362">
    <property type="antibodies" value="9 sequenced antibodies"/>
</dbReference>
<dbReference type="Antibodypedia" id="795">
    <property type="antibodies" value="3248 antibodies from 54 providers"/>
</dbReference>
<dbReference type="CPTC" id="P05362">
    <property type="antibodies" value="1 antibody"/>
</dbReference>
<dbReference type="DNASU" id="3383"/>
<dbReference type="Ensembl" id="ENST00000264832.8">
    <property type="protein sequence ID" value="ENSP00000264832.2"/>
    <property type="gene ID" value="ENSG00000090339.9"/>
</dbReference>
<dbReference type="GeneID" id="3383"/>
<dbReference type="KEGG" id="hsa:3383"/>
<dbReference type="MANE-Select" id="ENST00000264832.8">
    <property type="protein sequence ID" value="ENSP00000264832.2"/>
    <property type="RefSeq nucleotide sequence ID" value="NM_000201.3"/>
    <property type="RefSeq protein sequence ID" value="NP_000192.2"/>
</dbReference>
<dbReference type="UCSC" id="uc002mnq.3">
    <property type="organism name" value="human"/>
</dbReference>
<dbReference type="AGR" id="HGNC:5344"/>
<dbReference type="CTD" id="3383"/>
<dbReference type="DisGeNET" id="3383"/>
<dbReference type="GeneCards" id="ICAM1"/>
<dbReference type="HGNC" id="HGNC:5344">
    <property type="gene designation" value="ICAM1"/>
</dbReference>
<dbReference type="HPA" id="ENSG00000090339">
    <property type="expression patterns" value="Tissue enhanced (lung, urinary bladder)"/>
</dbReference>
<dbReference type="MalaCards" id="ICAM1"/>
<dbReference type="MIM" id="147840">
    <property type="type" value="gene"/>
</dbReference>
<dbReference type="MIM" id="611162">
    <property type="type" value="phenotype"/>
</dbReference>
<dbReference type="neXtProt" id="NX_P05362"/>
<dbReference type="OpenTargets" id="ENSG00000090339"/>
<dbReference type="PharmGKB" id="PA29592"/>
<dbReference type="VEuPathDB" id="HostDB:ENSG00000090339"/>
<dbReference type="eggNOG" id="ENOG502RZRA">
    <property type="taxonomic scope" value="Eukaryota"/>
</dbReference>
<dbReference type="GeneTree" id="ENSGT00940000162311"/>
<dbReference type="HOGENOM" id="CLU_036160_1_1_1"/>
<dbReference type="InParanoid" id="P05362"/>
<dbReference type="OMA" id="NLTVYWF"/>
<dbReference type="OrthoDB" id="6250964at2759"/>
<dbReference type="PAN-GO" id="P05362">
    <property type="GO annotations" value="3 GO annotations based on evolutionary models"/>
</dbReference>
<dbReference type="PhylomeDB" id="P05362"/>
<dbReference type="TreeFam" id="TF333745"/>
<dbReference type="PathwayCommons" id="P05362"/>
<dbReference type="Reactome" id="R-HSA-198933">
    <property type="pathway name" value="Immunoregulatory interactions between a Lymphoid and a non-Lymphoid cell"/>
</dbReference>
<dbReference type="Reactome" id="R-HSA-216083">
    <property type="pathway name" value="Integrin cell surface interactions"/>
</dbReference>
<dbReference type="Reactome" id="R-HSA-6783783">
    <property type="pathway name" value="Interleukin-10 signaling"/>
</dbReference>
<dbReference type="Reactome" id="R-HSA-6785807">
    <property type="pathway name" value="Interleukin-4 and Interleukin-13 signaling"/>
</dbReference>
<dbReference type="Reactome" id="R-HSA-877300">
    <property type="pathway name" value="Interferon gamma signaling"/>
</dbReference>
<dbReference type="SABIO-RK" id="P05362"/>
<dbReference type="SignaLink" id="P05362"/>
<dbReference type="SIGNOR" id="P05362"/>
<dbReference type="BioGRID-ORCS" id="3383">
    <property type="hits" value="36 hits in 1166 CRISPR screens"/>
</dbReference>
<dbReference type="ChiTaRS" id="ICAM1">
    <property type="organism name" value="human"/>
</dbReference>
<dbReference type="EvolutionaryTrace" id="P05362"/>
<dbReference type="GeneWiki" id="ICAM-1"/>
<dbReference type="GenomeRNAi" id="3383"/>
<dbReference type="Pharos" id="P05362">
    <property type="development level" value="Tchem"/>
</dbReference>
<dbReference type="PRO" id="PR:P05362"/>
<dbReference type="Proteomes" id="UP000005640">
    <property type="component" value="Chromosome 19"/>
</dbReference>
<dbReference type="RNAct" id="P05362">
    <property type="molecule type" value="protein"/>
</dbReference>
<dbReference type="Bgee" id="ENSG00000090339">
    <property type="expression patterns" value="Expressed in vena cava and 181 other cell types or tissues"/>
</dbReference>
<dbReference type="ExpressionAtlas" id="P05362">
    <property type="expression patterns" value="baseline and differential"/>
</dbReference>
<dbReference type="GO" id="GO:0009986">
    <property type="term" value="C:cell surface"/>
    <property type="evidence" value="ECO:0007005"/>
    <property type="project" value="UniProtKB"/>
</dbReference>
<dbReference type="GO" id="GO:0062023">
    <property type="term" value="C:collagen-containing extracellular matrix"/>
    <property type="evidence" value="ECO:0007005"/>
    <property type="project" value="BHF-UCL"/>
</dbReference>
<dbReference type="GO" id="GO:0009897">
    <property type="term" value="C:external side of plasma membrane"/>
    <property type="evidence" value="ECO:0007669"/>
    <property type="project" value="Ensembl"/>
</dbReference>
<dbReference type="GO" id="GO:0070062">
    <property type="term" value="C:extracellular exosome"/>
    <property type="evidence" value="ECO:0000314"/>
    <property type="project" value="UniProtKB"/>
</dbReference>
<dbReference type="GO" id="GO:0005615">
    <property type="term" value="C:extracellular space"/>
    <property type="evidence" value="ECO:0000314"/>
    <property type="project" value="BHF-UCL"/>
</dbReference>
<dbReference type="GO" id="GO:0005925">
    <property type="term" value="C:focal adhesion"/>
    <property type="evidence" value="ECO:0007005"/>
    <property type="project" value="UniProtKB"/>
</dbReference>
<dbReference type="GO" id="GO:0001772">
    <property type="term" value="C:immunological synapse"/>
    <property type="evidence" value="ECO:0007669"/>
    <property type="project" value="Ensembl"/>
</dbReference>
<dbReference type="GO" id="GO:0016020">
    <property type="term" value="C:membrane"/>
    <property type="evidence" value="ECO:0007005"/>
    <property type="project" value="UniProtKB"/>
</dbReference>
<dbReference type="GO" id="GO:0045121">
    <property type="term" value="C:membrane raft"/>
    <property type="evidence" value="ECO:0007669"/>
    <property type="project" value="Ensembl"/>
</dbReference>
<dbReference type="GO" id="GO:0005886">
    <property type="term" value="C:plasma membrane"/>
    <property type="evidence" value="ECO:0000318"/>
    <property type="project" value="GO_Central"/>
</dbReference>
<dbReference type="GO" id="GO:0005178">
    <property type="term" value="F:integrin binding"/>
    <property type="evidence" value="ECO:0000314"/>
    <property type="project" value="MGI"/>
</dbReference>
<dbReference type="GO" id="GO:0038023">
    <property type="term" value="F:signaling receptor activity"/>
    <property type="evidence" value="ECO:0000304"/>
    <property type="project" value="ProtInc"/>
</dbReference>
<dbReference type="GO" id="GO:0004888">
    <property type="term" value="F:transmembrane signaling receptor activity"/>
    <property type="evidence" value="ECO:0000304"/>
    <property type="project" value="ProtInc"/>
</dbReference>
<dbReference type="GO" id="GO:0001618">
    <property type="term" value="F:virus receptor activity"/>
    <property type="evidence" value="ECO:0007669"/>
    <property type="project" value="UniProtKB-KW"/>
</dbReference>
<dbReference type="GO" id="GO:0044406">
    <property type="term" value="P:adhesion of symbiont to host"/>
    <property type="evidence" value="ECO:0000314"/>
    <property type="project" value="BHF-UCL"/>
</dbReference>
<dbReference type="GO" id="GO:0007155">
    <property type="term" value="P:cell adhesion"/>
    <property type="evidence" value="ECO:0000314"/>
    <property type="project" value="BHF-UCL"/>
</dbReference>
<dbReference type="GO" id="GO:0033627">
    <property type="term" value="P:cell adhesion mediated by integrin"/>
    <property type="evidence" value="ECO:0007669"/>
    <property type="project" value="Ensembl"/>
</dbReference>
<dbReference type="GO" id="GO:1904646">
    <property type="term" value="P:cellular response to amyloid-beta"/>
    <property type="evidence" value="ECO:0000314"/>
    <property type="project" value="ARUK-UCL"/>
</dbReference>
<dbReference type="GO" id="GO:0071333">
    <property type="term" value="P:cellular response to glucose stimulus"/>
    <property type="evidence" value="ECO:0007669"/>
    <property type="project" value="Ensembl"/>
</dbReference>
<dbReference type="GO" id="GO:1990830">
    <property type="term" value="P:cellular response to leukemia inhibitory factor"/>
    <property type="evidence" value="ECO:0007669"/>
    <property type="project" value="Ensembl"/>
</dbReference>
<dbReference type="GO" id="GO:0061028">
    <property type="term" value="P:establishment of endothelial barrier"/>
    <property type="evidence" value="ECO:0000316"/>
    <property type="project" value="UniProtKB"/>
</dbReference>
<dbReference type="GO" id="GO:0007157">
    <property type="term" value="P:heterophilic cell-cell adhesion via plasma membrane cell adhesion molecules"/>
    <property type="evidence" value="ECO:0000304"/>
    <property type="project" value="BHF-UCL"/>
</dbReference>
<dbReference type="GO" id="GO:0007159">
    <property type="term" value="P:leukocyte cell-cell adhesion"/>
    <property type="evidence" value="ECO:0000315"/>
    <property type="project" value="BHF-UCL"/>
</dbReference>
<dbReference type="GO" id="GO:0050900">
    <property type="term" value="P:leukocyte migration"/>
    <property type="evidence" value="ECO:0000270"/>
    <property type="project" value="BHF-UCL"/>
</dbReference>
<dbReference type="GO" id="GO:0022614">
    <property type="term" value="P:membrane to membrane docking"/>
    <property type="evidence" value="ECO:0000270"/>
    <property type="project" value="BHF-UCL"/>
</dbReference>
<dbReference type="GO" id="GO:2000352">
    <property type="term" value="P:negative regulation of endothelial cell apoptotic process"/>
    <property type="evidence" value="ECO:0000314"/>
    <property type="project" value="BHF-UCL"/>
</dbReference>
<dbReference type="GO" id="GO:1902042">
    <property type="term" value="P:negative regulation of extrinsic apoptotic signaling pathway via death domain receptors"/>
    <property type="evidence" value="ECO:0000314"/>
    <property type="project" value="BHF-UCL"/>
</dbReference>
<dbReference type="GO" id="GO:0002693">
    <property type="term" value="P:positive regulation of cellular extravasation"/>
    <property type="evidence" value="ECO:0000315"/>
    <property type="project" value="BHF-UCL"/>
</dbReference>
<dbReference type="GO" id="GO:0070374">
    <property type="term" value="P:positive regulation of ERK1 and ERK2 cascade"/>
    <property type="evidence" value="ECO:0000315"/>
    <property type="project" value="BHF-UCL"/>
</dbReference>
<dbReference type="GO" id="GO:0046813">
    <property type="term" value="P:receptor-mediated virion attachment to host cell"/>
    <property type="evidence" value="ECO:0000314"/>
    <property type="project" value="BHF-UCL"/>
</dbReference>
<dbReference type="GO" id="GO:0001910">
    <property type="term" value="P:regulation of leukocyte mediated cytotoxicity"/>
    <property type="evidence" value="ECO:0000304"/>
    <property type="project" value="BHF-UCL"/>
</dbReference>
<dbReference type="GO" id="GO:1900027">
    <property type="term" value="P:regulation of ruffle assembly"/>
    <property type="evidence" value="ECO:0007669"/>
    <property type="project" value="Ensembl"/>
</dbReference>
<dbReference type="GO" id="GO:0002291">
    <property type="term" value="P:T cell activation via T cell receptor contact with antigen bound to MHC molecule on antigen presenting cell"/>
    <property type="evidence" value="ECO:0000315"/>
    <property type="project" value="BHF-UCL"/>
</dbReference>
<dbReference type="GO" id="GO:0002457">
    <property type="term" value="P:T cell antigen processing and presentation"/>
    <property type="evidence" value="ECO:0007669"/>
    <property type="project" value="Ensembl"/>
</dbReference>
<dbReference type="GO" id="GO:0072683">
    <property type="term" value="P:T cell extravasation"/>
    <property type="evidence" value="ECO:0007669"/>
    <property type="project" value="Ensembl"/>
</dbReference>
<dbReference type="CDD" id="cd05755">
    <property type="entry name" value="IgC2_2_ICAM-1_like"/>
    <property type="match status" value="1"/>
</dbReference>
<dbReference type="CDD" id="cd20996">
    <property type="entry name" value="IgI_N_ICAM-1"/>
    <property type="match status" value="1"/>
</dbReference>
<dbReference type="FunFam" id="2.60.40.10:FF:000194">
    <property type="entry name" value="Intercellular adhesion molecule 1"/>
    <property type="match status" value="1"/>
</dbReference>
<dbReference type="FunFam" id="2.60.40.10:FF:000459">
    <property type="entry name" value="Intercellular adhesion molecule 1"/>
    <property type="match status" value="1"/>
</dbReference>
<dbReference type="FunFam" id="2.60.40.10:FF:000641">
    <property type="entry name" value="Intercellular adhesion molecule 1"/>
    <property type="match status" value="1"/>
</dbReference>
<dbReference type="FunFam" id="2.60.40.10:FF:000648">
    <property type="entry name" value="Intercellular adhesion molecule 1"/>
    <property type="match status" value="1"/>
</dbReference>
<dbReference type="FunFam" id="2.60.40.10:FF:000338">
    <property type="entry name" value="intercellular adhesion molecule 5"/>
    <property type="match status" value="1"/>
</dbReference>
<dbReference type="Gene3D" id="2.60.40.10">
    <property type="entry name" value="Immunoglobulins"/>
    <property type="match status" value="5"/>
</dbReference>
<dbReference type="InterPro" id="IPR003988">
    <property type="entry name" value="ICAM"/>
</dbReference>
<dbReference type="InterPro" id="IPR048679">
    <property type="entry name" value="ICAM1_3_5_D2"/>
</dbReference>
<dbReference type="InterPro" id="IPR013768">
    <property type="entry name" value="ICAM_N"/>
</dbReference>
<dbReference type="InterPro" id="IPR047012">
    <property type="entry name" value="ICAM_VCAM"/>
</dbReference>
<dbReference type="InterPro" id="IPR003987">
    <property type="entry name" value="ICAM_VCAM_N"/>
</dbReference>
<dbReference type="InterPro" id="IPR036179">
    <property type="entry name" value="Ig-like_dom_sf"/>
</dbReference>
<dbReference type="InterPro" id="IPR013783">
    <property type="entry name" value="Ig-like_fold"/>
</dbReference>
<dbReference type="InterPro" id="IPR003599">
    <property type="entry name" value="Ig_sub"/>
</dbReference>
<dbReference type="PANTHER" id="PTHR13771">
    <property type="entry name" value="INTERCELLULAR ADHESION MOLECULE"/>
    <property type="match status" value="1"/>
</dbReference>
<dbReference type="PANTHER" id="PTHR13771:SF18">
    <property type="entry name" value="INTERCELLULAR ADHESION MOLECULE 1"/>
    <property type="match status" value="1"/>
</dbReference>
<dbReference type="Pfam" id="PF21146">
    <property type="entry name" value="ICAM1_3_5_D2"/>
    <property type="match status" value="1"/>
</dbReference>
<dbReference type="Pfam" id="PF03921">
    <property type="entry name" value="ICAM_N"/>
    <property type="match status" value="1"/>
</dbReference>
<dbReference type="Pfam" id="PF13895">
    <property type="entry name" value="Ig_2"/>
    <property type="match status" value="1"/>
</dbReference>
<dbReference type="PRINTS" id="PR01473">
    <property type="entry name" value="ICAM"/>
</dbReference>
<dbReference type="PRINTS" id="PR01472">
    <property type="entry name" value="ICAMVCAM1"/>
</dbReference>
<dbReference type="SMART" id="SM00409">
    <property type="entry name" value="IG"/>
    <property type="match status" value="3"/>
</dbReference>
<dbReference type="SUPFAM" id="SSF48726">
    <property type="entry name" value="Immunoglobulin"/>
    <property type="match status" value="5"/>
</dbReference>
<evidence type="ECO:0000255" key="1"/>
<evidence type="ECO:0000269" key="2">
    <source>
    </source>
</evidence>
<evidence type="ECO:0000269" key="3">
    <source>
    </source>
</evidence>
<evidence type="ECO:0000269" key="4">
    <source>
    </source>
</evidence>
<evidence type="ECO:0000269" key="5">
    <source>
    </source>
</evidence>
<evidence type="ECO:0000269" key="6">
    <source>
    </source>
</evidence>
<evidence type="ECO:0000269" key="7">
    <source>
    </source>
</evidence>
<evidence type="ECO:0000269" key="8">
    <source>
    </source>
</evidence>
<evidence type="ECO:0000269" key="9">
    <source>
    </source>
</evidence>
<evidence type="ECO:0000269" key="10">
    <source>
    </source>
</evidence>
<evidence type="ECO:0000269" key="11">
    <source>
    </source>
</evidence>
<evidence type="ECO:0000269" key="12">
    <source>
    </source>
</evidence>
<evidence type="ECO:0000269" key="13">
    <source>
    </source>
</evidence>
<evidence type="ECO:0000269" key="14">
    <source>
    </source>
</evidence>
<evidence type="ECO:0000269" key="15">
    <source>
    </source>
</evidence>
<evidence type="ECO:0000269" key="16">
    <source>
    </source>
</evidence>
<evidence type="ECO:0000269" key="17">
    <source>
    </source>
</evidence>
<evidence type="ECO:0000269" key="18">
    <source>
    </source>
</evidence>
<evidence type="ECO:0000269" key="19">
    <source>
    </source>
</evidence>
<evidence type="ECO:0000269" key="20">
    <source>
    </source>
</evidence>
<evidence type="ECO:0000269" key="21">
    <source>
    </source>
</evidence>
<evidence type="ECO:0000269" key="22">
    <source>
    </source>
</evidence>
<evidence type="ECO:0000269" key="23">
    <source>
    </source>
</evidence>
<evidence type="ECO:0000269" key="24">
    <source>
    </source>
</evidence>
<evidence type="ECO:0000269" key="25">
    <source>
    </source>
</evidence>
<evidence type="ECO:0000269" key="26">
    <source>
    </source>
</evidence>
<evidence type="ECO:0000269" key="27">
    <source ref="6"/>
</evidence>
<evidence type="ECO:0000305" key="28"/>
<evidence type="ECO:0007744" key="29">
    <source>
        <dbReference type="PDB" id="1IAM"/>
    </source>
</evidence>
<evidence type="ECO:0007744" key="30">
    <source>
        <dbReference type="PDB" id="1IC1"/>
    </source>
</evidence>
<evidence type="ECO:0007744" key="31">
    <source>
        <dbReference type="PDB" id="1MQ8"/>
    </source>
</evidence>
<evidence type="ECO:0007744" key="32">
    <source>
        <dbReference type="PDB" id="1P53"/>
    </source>
</evidence>
<evidence type="ECO:0007744" key="33">
    <source>
    </source>
</evidence>
<evidence type="ECO:0007744" key="34">
    <source>
    </source>
</evidence>
<evidence type="ECO:0007744" key="35">
    <source>
    </source>
</evidence>
<evidence type="ECO:0007744" key="36">
    <source>
    </source>
</evidence>
<evidence type="ECO:0007829" key="37">
    <source>
        <dbReference type="PDB" id="1IAM"/>
    </source>
</evidence>
<evidence type="ECO:0007829" key="38">
    <source>
        <dbReference type="PDB" id="1IC1"/>
    </source>
</evidence>
<evidence type="ECO:0007829" key="39">
    <source>
        <dbReference type="PDB" id="2OZ4"/>
    </source>
</evidence>
<evidence type="ECO:0007829" key="40">
    <source>
        <dbReference type="PDB" id="5MZA"/>
    </source>
</evidence>